<feature type="chain" id="PRO_1000084898" description="DNA polymerase IV">
    <location>
        <begin position="1"/>
        <end position="364"/>
    </location>
</feature>
<feature type="domain" description="UmuC" evidence="1">
    <location>
        <begin position="14"/>
        <end position="198"/>
    </location>
</feature>
<feature type="active site" evidence="1">
    <location>
        <position position="117"/>
    </location>
</feature>
<feature type="binding site" evidence="1">
    <location>
        <position position="18"/>
    </location>
    <ligand>
        <name>Mg(2+)</name>
        <dbReference type="ChEBI" id="CHEBI:18420"/>
    </ligand>
</feature>
<feature type="binding site" evidence="1">
    <location>
        <position position="116"/>
    </location>
    <ligand>
        <name>Mg(2+)</name>
        <dbReference type="ChEBI" id="CHEBI:18420"/>
    </ligand>
</feature>
<feature type="site" description="Substrate discrimination" evidence="1">
    <location>
        <position position="23"/>
    </location>
</feature>
<keyword id="KW-0963">Cytoplasm</keyword>
<keyword id="KW-0227">DNA damage</keyword>
<keyword id="KW-0234">DNA repair</keyword>
<keyword id="KW-0235">DNA replication</keyword>
<keyword id="KW-0238">DNA-binding</keyword>
<keyword id="KW-0239">DNA-directed DNA polymerase</keyword>
<keyword id="KW-0460">Magnesium</keyword>
<keyword id="KW-0479">Metal-binding</keyword>
<keyword id="KW-0515">Mutator protein</keyword>
<keyword id="KW-0548">Nucleotidyltransferase</keyword>
<keyword id="KW-0808">Transferase</keyword>
<proteinExistence type="inferred from homology"/>
<organism>
    <name type="scientific">Lactococcus lactis subsp. cremoris (strain SK11)</name>
    <dbReference type="NCBI Taxonomy" id="272622"/>
    <lineage>
        <taxon>Bacteria</taxon>
        <taxon>Bacillati</taxon>
        <taxon>Bacillota</taxon>
        <taxon>Bacilli</taxon>
        <taxon>Lactobacillales</taxon>
        <taxon>Streptococcaceae</taxon>
        <taxon>Lactococcus</taxon>
        <taxon>Lactococcus cremoris subsp. cremoris</taxon>
    </lineage>
</organism>
<dbReference type="EC" id="2.7.7.7" evidence="1"/>
<dbReference type="EMBL" id="CP000425">
    <property type="protein sequence ID" value="ABJ73769.1"/>
    <property type="molecule type" value="Genomic_DNA"/>
</dbReference>
<dbReference type="RefSeq" id="WP_011677101.1">
    <property type="nucleotide sequence ID" value="NC_008527.1"/>
</dbReference>
<dbReference type="SMR" id="Q02WA3"/>
<dbReference type="KEGG" id="llc:LACR_2314"/>
<dbReference type="HOGENOM" id="CLU_012348_1_2_9"/>
<dbReference type="Proteomes" id="UP000000240">
    <property type="component" value="Chromosome"/>
</dbReference>
<dbReference type="GO" id="GO:0005829">
    <property type="term" value="C:cytosol"/>
    <property type="evidence" value="ECO:0007669"/>
    <property type="project" value="TreeGrafter"/>
</dbReference>
<dbReference type="GO" id="GO:0003684">
    <property type="term" value="F:damaged DNA binding"/>
    <property type="evidence" value="ECO:0007669"/>
    <property type="project" value="InterPro"/>
</dbReference>
<dbReference type="GO" id="GO:0003887">
    <property type="term" value="F:DNA-directed DNA polymerase activity"/>
    <property type="evidence" value="ECO:0007669"/>
    <property type="project" value="UniProtKB-UniRule"/>
</dbReference>
<dbReference type="GO" id="GO:0000287">
    <property type="term" value="F:magnesium ion binding"/>
    <property type="evidence" value="ECO:0007669"/>
    <property type="project" value="UniProtKB-UniRule"/>
</dbReference>
<dbReference type="GO" id="GO:0006261">
    <property type="term" value="P:DNA-templated DNA replication"/>
    <property type="evidence" value="ECO:0007669"/>
    <property type="project" value="UniProtKB-UniRule"/>
</dbReference>
<dbReference type="GO" id="GO:0042276">
    <property type="term" value="P:error-prone translesion synthesis"/>
    <property type="evidence" value="ECO:0007669"/>
    <property type="project" value="TreeGrafter"/>
</dbReference>
<dbReference type="GO" id="GO:0009432">
    <property type="term" value="P:SOS response"/>
    <property type="evidence" value="ECO:0007669"/>
    <property type="project" value="TreeGrafter"/>
</dbReference>
<dbReference type="CDD" id="cd03586">
    <property type="entry name" value="PolY_Pol_IV_kappa"/>
    <property type="match status" value="1"/>
</dbReference>
<dbReference type="FunFam" id="3.30.1490.100:FF:000004">
    <property type="entry name" value="DNA polymerase IV"/>
    <property type="match status" value="1"/>
</dbReference>
<dbReference type="FunFam" id="3.40.1170.60:FF:000001">
    <property type="entry name" value="DNA polymerase IV"/>
    <property type="match status" value="1"/>
</dbReference>
<dbReference type="Gene3D" id="3.30.70.270">
    <property type="match status" value="1"/>
</dbReference>
<dbReference type="Gene3D" id="3.40.1170.60">
    <property type="match status" value="1"/>
</dbReference>
<dbReference type="Gene3D" id="1.10.150.20">
    <property type="entry name" value="5' to 3' exonuclease, C-terminal subdomain"/>
    <property type="match status" value="1"/>
</dbReference>
<dbReference type="Gene3D" id="3.30.1490.100">
    <property type="entry name" value="DNA polymerase, Y-family, little finger domain"/>
    <property type="match status" value="1"/>
</dbReference>
<dbReference type="HAMAP" id="MF_01113">
    <property type="entry name" value="DNApol_IV"/>
    <property type="match status" value="1"/>
</dbReference>
<dbReference type="InterPro" id="IPR043502">
    <property type="entry name" value="DNA/RNA_pol_sf"/>
</dbReference>
<dbReference type="InterPro" id="IPR036775">
    <property type="entry name" value="DNA_pol_Y-fam_lit_finger_sf"/>
</dbReference>
<dbReference type="InterPro" id="IPR017961">
    <property type="entry name" value="DNA_pol_Y-fam_little_finger"/>
</dbReference>
<dbReference type="InterPro" id="IPR050116">
    <property type="entry name" value="DNA_polymerase-Y"/>
</dbReference>
<dbReference type="InterPro" id="IPR022880">
    <property type="entry name" value="DNApol_IV"/>
</dbReference>
<dbReference type="InterPro" id="IPR024728">
    <property type="entry name" value="PolY_HhH_motif"/>
</dbReference>
<dbReference type="InterPro" id="IPR043128">
    <property type="entry name" value="Rev_trsase/Diguanyl_cyclase"/>
</dbReference>
<dbReference type="InterPro" id="IPR001126">
    <property type="entry name" value="UmuC"/>
</dbReference>
<dbReference type="NCBIfam" id="NF002677">
    <property type="entry name" value="PRK02406.1"/>
    <property type="match status" value="1"/>
</dbReference>
<dbReference type="PANTHER" id="PTHR11076:SF33">
    <property type="entry name" value="DNA POLYMERASE KAPPA"/>
    <property type="match status" value="1"/>
</dbReference>
<dbReference type="PANTHER" id="PTHR11076">
    <property type="entry name" value="DNA REPAIR POLYMERASE UMUC / TRANSFERASE FAMILY MEMBER"/>
    <property type="match status" value="1"/>
</dbReference>
<dbReference type="Pfam" id="PF00817">
    <property type="entry name" value="IMS"/>
    <property type="match status" value="1"/>
</dbReference>
<dbReference type="Pfam" id="PF11799">
    <property type="entry name" value="IMS_C"/>
    <property type="match status" value="1"/>
</dbReference>
<dbReference type="Pfam" id="PF11798">
    <property type="entry name" value="IMS_HHH"/>
    <property type="match status" value="1"/>
</dbReference>
<dbReference type="SUPFAM" id="SSF56672">
    <property type="entry name" value="DNA/RNA polymerases"/>
    <property type="match status" value="1"/>
</dbReference>
<dbReference type="SUPFAM" id="SSF100879">
    <property type="entry name" value="Lesion bypass DNA polymerase (Y-family), little finger domain"/>
    <property type="match status" value="1"/>
</dbReference>
<dbReference type="PROSITE" id="PS50173">
    <property type="entry name" value="UMUC"/>
    <property type="match status" value="1"/>
</dbReference>
<evidence type="ECO:0000255" key="1">
    <source>
        <dbReference type="HAMAP-Rule" id="MF_01113"/>
    </source>
</evidence>
<sequence length="364" mass="40568">MLTFPLINDTSRKIIHIDMDAFFASVEVRDNPSLKGKPVVIARNPLQTGGRGVVSTCSYEARAFGIHSAMSAKEAYDLCPQAIFISGNYEKYTKVSKQVREIFKRYTDNIEAASIDEAYLDVTENKIGAQSAIKIAKLIQHDIFVELGLTCSAGVSYNKFLAKIASDYEKPHGLTLIMPDEALEFLAKLPVEKFHGVGKATVPKLHALGFFTGGDLQKADPVDLAEKFGIYGWELFQKANGIHNSKVKNHRERKSVGKERTYGKLLYLPDDIKAELIKISKQVSESLKRHQLKGNIIILKLRYSDFTTLTKRKSMVENLDSPEDIAEAAQQIFEEIDYDESLGVRLLGVTVSGFGVQKATLDMQ</sequence>
<gene>
    <name evidence="1" type="primary">dinB</name>
    <name type="ordered locus">LACR_2314</name>
</gene>
<accession>Q02WA3</accession>
<reference key="1">
    <citation type="journal article" date="2006" name="Proc. Natl. Acad. Sci. U.S.A.">
        <title>Comparative genomics of the lactic acid bacteria.</title>
        <authorList>
            <person name="Makarova K.S."/>
            <person name="Slesarev A."/>
            <person name="Wolf Y.I."/>
            <person name="Sorokin A."/>
            <person name="Mirkin B."/>
            <person name="Koonin E.V."/>
            <person name="Pavlov A."/>
            <person name="Pavlova N."/>
            <person name="Karamychev V."/>
            <person name="Polouchine N."/>
            <person name="Shakhova V."/>
            <person name="Grigoriev I."/>
            <person name="Lou Y."/>
            <person name="Rohksar D."/>
            <person name="Lucas S."/>
            <person name="Huang K."/>
            <person name="Goodstein D.M."/>
            <person name="Hawkins T."/>
            <person name="Plengvidhya V."/>
            <person name="Welker D."/>
            <person name="Hughes J."/>
            <person name="Goh Y."/>
            <person name="Benson A."/>
            <person name="Baldwin K."/>
            <person name="Lee J.-H."/>
            <person name="Diaz-Muniz I."/>
            <person name="Dosti B."/>
            <person name="Smeianov V."/>
            <person name="Wechter W."/>
            <person name="Barabote R."/>
            <person name="Lorca G."/>
            <person name="Altermann E."/>
            <person name="Barrangou R."/>
            <person name="Ganesan B."/>
            <person name="Xie Y."/>
            <person name="Rawsthorne H."/>
            <person name="Tamir D."/>
            <person name="Parker C."/>
            <person name="Breidt F."/>
            <person name="Broadbent J.R."/>
            <person name="Hutkins R."/>
            <person name="O'Sullivan D."/>
            <person name="Steele J."/>
            <person name="Unlu G."/>
            <person name="Saier M.H. Jr."/>
            <person name="Klaenhammer T."/>
            <person name="Richardson P."/>
            <person name="Kozyavkin S."/>
            <person name="Weimer B.C."/>
            <person name="Mills D.A."/>
        </authorList>
    </citation>
    <scope>NUCLEOTIDE SEQUENCE [LARGE SCALE GENOMIC DNA]</scope>
    <source>
        <strain>SK11</strain>
    </source>
</reference>
<protein>
    <recommendedName>
        <fullName evidence="1">DNA polymerase IV</fullName>
        <shortName evidence="1">Pol IV</shortName>
        <ecNumber evidence="1">2.7.7.7</ecNumber>
    </recommendedName>
</protein>
<comment type="function">
    <text evidence="1">Poorly processive, error-prone DNA polymerase involved in untargeted mutagenesis. Copies undamaged DNA at stalled replication forks, which arise in vivo from mismatched or misaligned primer ends. These misaligned primers can be extended by PolIV. Exhibits no 3'-5' exonuclease (proofreading) activity. May be involved in translesional synthesis, in conjunction with the beta clamp from PolIII.</text>
</comment>
<comment type="catalytic activity">
    <reaction evidence="1">
        <text>DNA(n) + a 2'-deoxyribonucleoside 5'-triphosphate = DNA(n+1) + diphosphate</text>
        <dbReference type="Rhea" id="RHEA:22508"/>
        <dbReference type="Rhea" id="RHEA-COMP:17339"/>
        <dbReference type="Rhea" id="RHEA-COMP:17340"/>
        <dbReference type="ChEBI" id="CHEBI:33019"/>
        <dbReference type="ChEBI" id="CHEBI:61560"/>
        <dbReference type="ChEBI" id="CHEBI:173112"/>
        <dbReference type="EC" id="2.7.7.7"/>
    </reaction>
</comment>
<comment type="cofactor">
    <cofactor evidence="1">
        <name>Mg(2+)</name>
        <dbReference type="ChEBI" id="CHEBI:18420"/>
    </cofactor>
    <text evidence="1">Binds 2 magnesium ions per subunit.</text>
</comment>
<comment type="subunit">
    <text evidence="1">Monomer.</text>
</comment>
<comment type="subcellular location">
    <subcellularLocation>
        <location evidence="1">Cytoplasm</location>
    </subcellularLocation>
</comment>
<comment type="similarity">
    <text evidence="1">Belongs to the DNA polymerase type-Y family.</text>
</comment>
<name>DPO4_LACLS</name>